<comment type="function">
    <text evidence="1">Could be a nuclease involved in processing of the 5'-end of pre-16S rRNA.</text>
</comment>
<comment type="subcellular location">
    <subcellularLocation>
        <location evidence="1">Cytoplasm</location>
    </subcellularLocation>
</comment>
<comment type="similarity">
    <text evidence="1">Belongs to the YqgF nuclease family.</text>
</comment>
<evidence type="ECO:0000255" key="1">
    <source>
        <dbReference type="HAMAP-Rule" id="MF_00651"/>
    </source>
</evidence>
<reference key="1">
    <citation type="journal article" date="2000" name="Science">
        <title>Complete genome sequence of Neisseria meningitidis serogroup B strain MC58.</title>
        <authorList>
            <person name="Tettelin H."/>
            <person name="Saunders N.J."/>
            <person name="Heidelberg J.F."/>
            <person name="Jeffries A.C."/>
            <person name="Nelson K.E."/>
            <person name="Eisen J.A."/>
            <person name="Ketchum K.A."/>
            <person name="Hood D.W."/>
            <person name="Peden J.F."/>
            <person name="Dodson R.J."/>
            <person name="Nelson W.C."/>
            <person name="Gwinn M.L."/>
            <person name="DeBoy R.T."/>
            <person name="Peterson J.D."/>
            <person name="Hickey E.K."/>
            <person name="Haft D.H."/>
            <person name="Salzberg S.L."/>
            <person name="White O."/>
            <person name="Fleischmann R.D."/>
            <person name="Dougherty B.A."/>
            <person name="Mason T.M."/>
            <person name="Ciecko A."/>
            <person name="Parksey D.S."/>
            <person name="Blair E."/>
            <person name="Cittone H."/>
            <person name="Clark E.B."/>
            <person name="Cotton M.D."/>
            <person name="Utterback T.R."/>
            <person name="Khouri H.M."/>
            <person name="Qin H."/>
            <person name="Vamathevan J.J."/>
            <person name="Gill J."/>
            <person name="Scarlato V."/>
            <person name="Masignani V."/>
            <person name="Pizza M."/>
            <person name="Grandi G."/>
            <person name="Sun L."/>
            <person name="Smith H.O."/>
            <person name="Fraser C.M."/>
            <person name="Moxon E.R."/>
            <person name="Rappuoli R."/>
            <person name="Venter J.C."/>
        </authorList>
    </citation>
    <scope>NUCLEOTIDE SEQUENCE [LARGE SCALE GENOMIC DNA]</scope>
    <source>
        <strain>ATCC BAA-335 / MC58</strain>
    </source>
</reference>
<dbReference type="EC" id="3.1.-.-" evidence="1"/>
<dbReference type="EMBL" id="AE002098">
    <property type="protein sequence ID" value="AAF41712.1"/>
    <property type="molecule type" value="Genomic_DNA"/>
</dbReference>
<dbReference type="PIR" id="A81094">
    <property type="entry name" value="A81094"/>
</dbReference>
<dbReference type="RefSeq" id="NP_274356.1">
    <property type="nucleotide sequence ID" value="NC_003112.2"/>
</dbReference>
<dbReference type="SMR" id="Q9JZ16"/>
<dbReference type="FunCoup" id="Q9JZ16">
    <property type="interactions" value="324"/>
</dbReference>
<dbReference type="STRING" id="122586.NMB1337"/>
<dbReference type="PaxDb" id="122586-NMB1337"/>
<dbReference type="KEGG" id="nme:NMB1337"/>
<dbReference type="PATRIC" id="fig|122586.8.peg.1676"/>
<dbReference type="HOGENOM" id="CLU_098240_3_2_4"/>
<dbReference type="InParanoid" id="Q9JZ16"/>
<dbReference type="OrthoDB" id="9796140at2"/>
<dbReference type="Proteomes" id="UP000000425">
    <property type="component" value="Chromosome"/>
</dbReference>
<dbReference type="GO" id="GO:0005737">
    <property type="term" value="C:cytoplasm"/>
    <property type="evidence" value="ECO:0007669"/>
    <property type="project" value="UniProtKB-SubCell"/>
</dbReference>
<dbReference type="GO" id="GO:0004518">
    <property type="term" value="F:nuclease activity"/>
    <property type="evidence" value="ECO:0007669"/>
    <property type="project" value="UniProtKB-KW"/>
</dbReference>
<dbReference type="GO" id="GO:0000967">
    <property type="term" value="P:rRNA 5'-end processing"/>
    <property type="evidence" value="ECO:0000318"/>
    <property type="project" value="GO_Central"/>
</dbReference>
<dbReference type="CDD" id="cd16964">
    <property type="entry name" value="YqgF"/>
    <property type="match status" value="1"/>
</dbReference>
<dbReference type="FunFam" id="3.30.420.140:FF:000012">
    <property type="entry name" value="Putative pre-16S rRNA nuclease"/>
    <property type="match status" value="1"/>
</dbReference>
<dbReference type="Gene3D" id="3.30.420.140">
    <property type="entry name" value="YqgF/RNase H-like domain"/>
    <property type="match status" value="1"/>
</dbReference>
<dbReference type="HAMAP" id="MF_00651">
    <property type="entry name" value="Nuclease_YqgF"/>
    <property type="match status" value="1"/>
</dbReference>
<dbReference type="InterPro" id="IPR012337">
    <property type="entry name" value="RNaseH-like_sf"/>
</dbReference>
<dbReference type="InterPro" id="IPR005227">
    <property type="entry name" value="YqgF"/>
</dbReference>
<dbReference type="InterPro" id="IPR006641">
    <property type="entry name" value="YqgF/RNaseH-like_dom"/>
</dbReference>
<dbReference type="InterPro" id="IPR037027">
    <property type="entry name" value="YqgF/RNaseH-like_dom_sf"/>
</dbReference>
<dbReference type="NCBIfam" id="TIGR00250">
    <property type="entry name" value="RNAse_H_YqgF"/>
    <property type="match status" value="1"/>
</dbReference>
<dbReference type="PANTHER" id="PTHR33317">
    <property type="entry name" value="POLYNUCLEOTIDYL TRANSFERASE, RIBONUCLEASE H-LIKE SUPERFAMILY PROTEIN"/>
    <property type="match status" value="1"/>
</dbReference>
<dbReference type="PANTHER" id="PTHR33317:SF4">
    <property type="entry name" value="POLYNUCLEOTIDYL TRANSFERASE, RIBONUCLEASE H-LIKE SUPERFAMILY PROTEIN"/>
    <property type="match status" value="1"/>
</dbReference>
<dbReference type="Pfam" id="PF03652">
    <property type="entry name" value="RuvX"/>
    <property type="match status" value="1"/>
</dbReference>
<dbReference type="SMART" id="SM00732">
    <property type="entry name" value="YqgFc"/>
    <property type="match status" value="1"/>
</dbReference>
<dbReference type="SUPFAM" id="SSF53098">
    <property type="entry name" value="Ribonuclease H-like"/>
    <property type="match status" value="1"/>
</dbReference>
<feature type="chain" id="PRO_0000172104" description="Putative pre-16S rRNA nuclease">
    <location>
        <begin position="1"/>
        <end position="151"/>
    </location>
</feature>
<sequence length="151" mass="16600">MHKIPKGTALAFDFGEARIGVAQGDAELGLSHPLSTVTGGSNDEKFAAIAKLVQEWQPRYFVVGLPVHTDGTKHEMTHLSRKFGRRLNGRFNLPVYWVDERLSSVYAESLLSEAQVFGKKRKSVLDQVAAQAILHGFFEGGPAECFNGREG</sequence>
<protein>
    <recommendedName>
        <fullName evidence="1">Putative pre-16S rRNA nuclease</fullName>
        <ecNumber evidence="1">3.1.-.-</ecNumber>
    </recommendedName>
</protein>
<proteinExistence type="inferred from homology"/>
<organism>
    <name type="scientific">Neisseria meningitidis serogroup B (strain ATCC BAA-335 / MC58)</name>
    <dbReference type="NCBI Taxonomy" id="122586"/>
    <lineage>
        <taxon>Bacteria</taxon>
        <taxon>Pseudomonadati</taxon>
        <taxon>Pseudomonadota</taxon>
        <taxon>Betaproteobacteria</taxon>
        <taxon>Neisseriales</taxon>
        <taxon>Neisseriaceae</taxon>
        <taxon>Neisseria</taxon>
    </lineage>
</organism>
<keyword id="KW-0963">Cytoplasm</keyword>
<keyword id="KW-0378">Hydrolase</keyword>
<keyword id="KW-0540">Nuclease</keyword>
<keyword id="KW-1185">Reference proteome</keyword>
<keyword id="KW-0690">Ribosome biogenesis</keyword>
<accession>Q9JZ16</accession>
<name>YQGF_NEIMB</name>
<gene>
    <name type="ordered locus">NMB1337</name>
</gene>